<protein>
    <recommendedName>
        <fullName evidence="1">Serine hydroxymethyltransferase</fullName>
        <shortName evidence="1">SHMT</shortName>
        <shortName evidence="1">Serine methylase</shortName>
        <ecNumber evidence="1">2.1.2.1</ecNumber>
    </recommendedName>
</protein>
<feature type="chain" id="PRO_0000369919" description="Serine hydroxymethyltransferase">
    <location>
        <begin position="1"/>
        <end position="419"/>
    </location>
</feature>
<feature type="binding site" evidence="1">
    <location>
        <position position="119"/>
    </location>
    <ligand>
        <name>(6S)-5,6,7,8-tetrahydrofolate</name>
        <dbReference type="ChEBI" id="CHEBI:57453"/>
    </ligand>
</feature>
<feature type="binding site" evidence="1">
    <location>
        <begin position="123"/>
        <end position="125"/>
    </location>
    <ligand>
        <name>(6S)-5,6,7,8-tetrahydrofolate</name>
        <dbReference type="ChEBI" id="CHEBI:57453"/>
    </ligand>
</feature>
<feature type="site" description="Plays an important role in substrate specificity" evidence="1">
    <location>
        <position position="227"/>
    </location>
</feature>
<feature type="modified residue" description="N6-(pyridoxal phosphate)lysine" evidence="1">
    <location>
        <position position="228"/>
    </location>
</feature>
<comment type="function">
    <text evidence="1">Catalyzes the reversible interconversion of serine and glycine with tetrahydrofolate (THF) serving as the one-carbon carrier. This reaction serves as the major source of one-carbon groups required for the biosynthesis of purines, thymidylate, methionine, and other important biomolecules. Also exhibits THF-independent aldolase activity toward beta-hydroxyamino acids, producing glycine and aldehydes, via a retro-aldol mechanism.</text>
</comment>
<comment type="catalytic activity">
    <reaction evidence="1">
        <text>(6R)-5,10-methylene-5,6,7,8-tetrahydrofolate + glycine + H2O = (6S)-5,6,7,8-tetrahydrofolate + L-serine</text>
        <dbReference type="Rhea" id="RHEA:15481"/>
        <dbReference type="ChEBI" id="CHEBI:15377"/>
        <dbReference type="ChEBI" id="CHEBI:15636"/>
        <dbReference type="ChEBI" id="CHEBI:33384"/>
        <dbReference type="ChEBI" id="CHEBI:57305"/>
        <dbReference type="ChEBI" id="CHEBI:57453"/>
        <dbReference type="EC" id="2.1.2.1"/>
    </reaction>
</comment>
<comment type="cofactor">
    <cofactor evidence="1">
        <name>pyridoxal 5'-phosphate</name>
        <dbReference type="ChEBI" id="CHEBI:597326"/>
    </cofactor>
</comment>
<comment type="pathway">
    <text evidence="1">One-carbon metabolism; tetrahydrofolate interconversion.</text>
</comment>
<comment type="pathway">
    <text evidence="1">Amino-acid biosynthesis; glycine biosynthesis; glycine from L-serine: step 1/1.</text>
</comment>
<comment type="subunit">
    <text evidence="1">Homodimer.</text>
</comment>
<comment type="subcellular location">
    <subcellularLocation>
        <location evidence="1">Cytoplasm</location>
    </subcellularLocation>
</comment>
<comment type="similarity">
    <text evidence="1">Belongs to the SHMT family.</text>
</comment>
<evidence type="ECO:0000255" key="1">
    <source>
        <dbReference type="HAMAP-Rule" id="MF_00051"/>
    </source>
</evidence>
<proteinExistence type="inferred from homology"/>
<gene>
    <name evidence="1" type="primary">glyA</name>
    <name type="ordered locus">Dole_2082</name>
</gene>
<reference key="1">
    <citation type="submission" date="2007-10" db="EMBL/GenBank/DDBJ databases">
        <title>Complete sequence of Desulfococcus oleovorans Hxd3.</title>
        <authorList>
            <consortium name="US DOE Joint Genome Institute"/>
            <person name="Copeland A."/>
            <person name="Lucas S."/>
            <person name="Lapidus A."/>
            <person name="Barry K."/>
            <person name="Glavina del Rio T."/>
            <person name="Dalin E."/>
            <person name="Tice H."/>
            <person name="Pitluck S."/>
            <person name="Kiss H."/>
            <person name="Brettin T."/>
            <person name="Bruce D."/>
            <person name="Detter J.C."/>
            <person name="Han C."/>
            <person name="Schmutz J."/>
            <person name="Larimer F."/>
            <person name="Land M."/>
            <person name="Hauser L."/>
            <person name="Kyrpides N."/>
            <person name="Kim E."/>
            <person name="Wawrik B."/>
            <person name="Richardson P."/>
        </authorList>
    </citation>
    <scope>NUCLEOTIDE SEQUENCE [LARGE SCALE GENOMIC DNA]</scope>
    <source>
        <strain>DSM 6200 / JCM 39069 / Hxd3</strain>
    </source>
</reference>
<accession>A8ZTV3</accession>
<sequence>MIIDYLAQQDPEVAGAVAREVERQQHNLELIASENIASRAVMAAQGSVLTNKYAEGYPGKRYYGGCEYVDQAEQIAIDRAKTLFGAAYANVQPHSGSQANMAVYFALLSPGDTGLGMDLAHGGHLTHGSPVSFSGRLFDFKHYGVKKETGTIDYDQVADLAKTHRPKMIIAGASAYPRTLDFEKFAQIAASVEACLVVDMAHIAGLVAAGVHPSPVPHADVVTSTTHKTLRGPRGGLILSARADFGKALNKEIFPGIQGGPLMHVIAAKAVAFGEALTDGFVAYQQQVVKNARALAAHLMEQGIELVSGGTDNHMMLADLRNISVTGKAAETALERAGLTLNKNAVPFDTENPTVTSGVRIGTPVMTTRGMKEPEMAVVAGLIVNVLKNISNDTVIQATRKRVMELCEAFPIYRDNDNG</sequence>
<keyword id="KW-0028">Amino-acid biosynthesis</keyword>
<keyword id="KW-0963">Cytoplasm</keyword>
<keyword id="KW-0554">One-carbon metabolism</keyword>
<keyword id="KW-0663">Pyridoxal phosphate</keyword>
<keyword id="KW-1185">Reference proteome</keyword>
<keyword id="KW-0808">Transferase</keyword>
<organism>
    <name type="scientific">Desulfosudis oleivorans (strain DSM 6200 / JCM 39069 / Hxd3)</name>
    <name type="common">Desulfococcus oleovorans</name>
    <dbReference type="NCBI Taxonomy" id="96561"/>
    <lineage>
        <taxon>Bacteria</taxon>
        <taxon>Pseudomonadati</taxon>
        <taxon>Thermodesulfobacteriota</taxon>
        <taxon>Desulfobacteria</taxon>
        <taxon>Desulfobacterales</taxon>
        <taxon>Desulfosudaceae</taxon>
        <taxon>Desulfosudis</taxon>
    </lineage>
</organism>
<dbReference type="EC" id="2.1.2.1" evidence="1"/>
<dbReference type="EMBL" id="CP000859">
    <property type="protein sequence ID" value="ABW67886.1"/>
    <property type="molecule type" value="Genomic_DNA"/>
</dbReference>
<dbReference type="RefSeq" id="WP_012175498.1">
    <property type="nucleotide sequence ID" value="NC_009943.1"/>
</dbReference>
<dbReference type="SMR" id="A8ZTV3"/>
<dbReference type="STRING" id="96561.Dole_2082"/>
<dbReference type="KEGG" id="dol:Dole_2082"/>
<dbReference type="eggNOG" id="COG0112">
    <property type="taxonomic scope" value="Bacteria"/>
</dbReference>
<dbReference type="HOGENOM" id="CLU_022477_2_1_7"/>
<dbReference type="UniPathway" id="UPA00193"/>
<dbReference type="UniPathway" id="UPA00288">
    <property type="reaction ID" value="UER01023"/>
</dbReference>
<dbReference type="Proteomes" id="UP000008561">
    <property type="component" value="Chromosome"/>
</dbReference>
<dbReference type="GO" id="GO:0005829">
    <property type="term" value="C:cytosol"/>
    <property type="evidence" value="ECO:0007669"/>
    <property type="project" value="TreeGrafter"/>
</dbReference>
<dbReference type="GO" id="GO:0004372">
    <property type="term" value="F:glycine hydroxymethyltransferase activity"/>
    <property type="evidence" value="ECO:0007669"/>
    <property type="project" value="UniProtKB-UniRule"/>
</dbReference>
<dbReference type="GO" id="GO:0030170">
    <property type="term" value="F:pyridoxal phosphate binding"/>
    <property type="evidence" value="ECO:0007669"/>
    <property type="project" value="UniProtKB-UniRule"/>
</dbReference>
<dbReference type="GO" id="GO:0019264">
    <property type="term" value="P:glycine biosynthetic process from serine"/>
    <property type="evidence" value="ECO:0007669"/>
    <property type="project" value="UniProtKB-UniRule"/>
</dbReference>
<dbReference type="GO" id="GO:0035999">
    <property type="term" value="P:tetrahydrofolate interconversion"/>
    <property type="evidence" value="ECO:0007669"/>
    <property type="project" value="UniProtKB-UniRule"/>
</dbReference>
<dbReference type="CDD" id="cd00378">
    <property type="entry name" value="SHMT"/>
    <property type="match status" value="1"/>
</dbReference>
<dbReference type="FunFam" id="3.40.640.10:FF:000001">
    <property type="entry name" value="Serine hydroxymethyltransferase"/>
    <property type="match status" value="1"/>
</dbReference>
<dbReference type="FunFam" id="3.90.1150.10:FF:000003">
    <property type="entry name" value="Serine hydroxymethyltransferase"/>
    <property type="match status" value="1"/>
</dbReference>
<dbReference type="Gene3D" id="3.90.1150.10">
    <property type="entry name" value="Aspartate Aminotransferase, domain 1"/>
    <property type="match status" value="1"/>
</dbReference>
<dbReference type="Gene3D" id="3.40.640.10">
    <property type="entry name" value="Type I PLP-dependent aspartate aminotransferase-like (Major domain)"/>
    <property type="match status" value="1"/>
</dbReference>
<dbReference type="HAMAP" id="MF_00051">
    <property type="entry name" value="SHMT"/>
    <property type="match status" value="1"/>
</dbReference>
<dbReference type="InterPro" id="IPR015424">
    <property type="entry name" value="PyrdxlP-dep_Trfase"/>
</dbReference>
<dbReference type="InterPro" id="IPR015421">
    <property type="entry name" value="PyrdxlP-dep_Trfase_major"/>
</dbReference>
<dbReference type="InterPro" id="IPR015422">
    <property type="entry name" value="PyrdxlP-dep_Trfase_small"/>
</dbReference>
<dbReference type="InterPro" id="IPR001085">
    <property type="entry name" value="Ser_HO-MeTrfase"/>
</dbReference>
<dbReference type="InterPro" id="IPR049943">
    <property type="entry name" value="Ser_HO-MeTrfase-like"/>
</dbReference>
<dbReference type="InterPro" id="IPR019798">
    <property type="entry name" value="Ser_HO-MeTrfase_PLP_BS"/>
</dbReference>
<dbReference type="InterPro" id="IPR039429">
    <property type="entry name" value="SHMT-like_dom"/>
</dbReference>
<dbReference type="NCBIfam" id="NF000586">
    <property type="entry name" value="PRK00011.1"/>
    <property type="match status" value="1"/>
</dbReference>
<dbReference type="PANTHER" id="PTHR11680">
    <property type="entry name" value="SERINE HYDROXYMETHYLTRANSFERASE"/>
    <property type="match status" value="1"/>
</dbReference>
<dbReference type="PANTHER" id="PTHR11680:SF35">
    <property type="entry name" value="SERINE HYDROXYMETHYLTRANSFERASE 1"/>
    <property type="match status" value="1"/>
</dbReference>
<dbReference type="Pfam" id="PF00464">
    <property type="entry name" value="SHMT"/>
    <property type="match status" value="1"/>
</dbReference>
<dbReference type="PIRSF" id="PIRSF000412">
    <property type="entry name" value="SHMT"/>
    <property type="match status" value="1"/>
</dbReference>
<dbReference type="SUPFAM" id="SSF53383">
    <property type="entry name" value="PLP-dependent transferases"/>
    <property type="match status" value="1"/>
</dbReference>
<dbReference type="PROSITE" id="PS00096">
    <property type="entry name" value="SHMT"/>
    <property type="match status" value="1"/>
</dbReference>
<name>GLYA_DESOH</name>